<organism>
    <name type="scientific">Danio rerio</name>
    <name type="common">Zebrafish</name>
    <name type="synonym">Brachydanio rerio</name>
    <dbReference type="NCBI Taxonomy" id="7955"/>
    <lineage>
        <taxon>Eukaryota</taxon>
        <taxon>Metazoa</taxon>
        <taxon>Chordata</taxon>
        <taxon>Craniata</taxon>
        <taxon>Vertebrata</taxon>
        <taxon>Euteleostomi</taxon>
        <taxon>Actinopterygii</taxon>
        <taxon>Neopterygii</taxon>
        <taxon>Teleostei</taxon>
        <taxon>Ostariophysi</taxon>
        <taxon>Cypriniformes</taxon>
        <taxon>Danionidae</taxon>
        <taxon>Danioninae</taxon>
        <taxon>Danio</taxon>
    </lineage>
</organism>
<sequence>MGGYGVMADEESLDYSVHEAWNEATNVYLLVILVSFALLMYARKNKRKIMRIFTLPPTVGSSSEPNFYDSLQKVRLRQQLEMYSLARKYDQQQSQSESVQLSME</sequence>
<protein>
    <recommendedName>
        <fullName>Small integral membrane protein 19</fullName>
    </recommendedName>
</protein>
<dbReference type="EMBL" id="BC097106">
    <property type="protein sequence ID" value="AAH97106.1"/>
    <property type="status" value="ALT_INIT"/>
    <property type="molecule type" value="mRNA"/>
</dbReference>
<dbReference type="RefSeq" id="NP_001020706.2">
    <property type="nucleotide sequence ID" value="NM_001025535.2"/>
</dbReference>
<dbReference type="FunCoup" id="Q4V921">
    <property type="interactions" value="1903"/>
</dbReference>
<dbReference type="PaxDb" id="7955-ENSDARP00000054461"/>
<dbReference type="Ensembl" id="ENSDART00000054462">
    <property type="protein sequence ID" value="ENSDARP00000054461"/>
    <property type="gene ID" value="ENSDARG00000037423"/>
</dbReference>
<dbReference type="Ensembl" id="ENSDART00000166078">
    <property type="protein sequence ID" value="ENSDARP00000134603"/>
    <property type="gene ID" value="ENSDARG00000037423"/>
</dbReference>
<dbReference type="Ensembl" id="ENSDART00000183407">
    <property type="protein sequence ID" value="ENSDARP00000153819"/>
    <property type="gene ID" value="ENSDARG00000110214"/>
</dbReference>
<dbReference type="GeneID" id="565058"/>
<dbReference type="KEGG" id="dre:565058"/>
<dbReference type="AGR" id="ZFIN:ZDB-GENE-050913-125"/>
<dbReference type="CTD" id="114926"/>
<dbReference type="ZFIN" id="ZDB-GENE-050913-125">
    <property type="gene designation" value="smim19"/>
</dbReference>
<dbReference type="eggNOG" id="ENOG502S18T">
    <property type="taxonomic scope" value="Eukaryota"/>
</dbReference>
<dbReference type="HOGENOM" id="CLU_172229_0_0_1"/>
<dbReference type="InParanoid" id="Q4V921"/>
<dbReference type="OMA" id="GNQPDSI"/>
<dbReference type="OrthoDB" id="8663985at2759"/>
<dbReference type="PhylomeDB" id="Q4V921"/>
<dbReference type="TreeFam" id="TF332548"/>
<dbReference type="PRO" id="PR:Q4V921"/>
<dbReference type="Proteomes" id="UP000000437">
    <property type="component" value="Alternate scaffold 14"/>
</dbReference>
<dbReference type="Proteomes" id="UP000000437">
    <property type="component" value="Chromosome 14"/>
</dbReference>
<dbReference type="Bgee" id="ENSDARG00000037423">
    <property type="expression patterns" value="Expressed in early embryo and 19 other cell types or tissues"/>
</dbReference>
<dbReference type="ExpressionAtlas" id="Q4V921">
    <property type="expression patterns" value="baseline"/>
</dbReference>
<dbReference type="GO" id="GO:0016020">
    <property type="term" value="C:membrane"/>
    <property type="evidence" value="ECO:0007669"/>
    <property type="project" value="UniProtKB-SubCell"/>
</dbReference>
<dbReference type="InterPro" id="IPR029368">
    <property type="entry name" value="SMIM19"/>
</dbReference>
<dbReference type="PANTHER" id="PTHR31888">
    <property type="entry name" value="SMALL INTEGRAL MEMBRANE PROTEIN 19"/>
    <property type="match status" value="1"/>
</dbReference>
<dbReference type="PANTHER" id="PTHR31888:SF1">
    <property type="entry name" value="SMALL INTEGRAL MEMBRANE PROTEIN 19"/>
    <property type="match status" value="1"/>
</dbReference>
<dbReference type="Pfam" id="PF15117">
    <property type="entry name" value="UPF0697"/>
    <property type="match status" value="1"/>
</dbReference>
<reference key="1">
    <citation type="submission" date="2005-06" db="EMBL/GenBank/DDBJ databases">
        <authorList>
            <consortium name="NIH - Zebrafish Gene Collection (ZGC) project"/>
        </authorList>
    </citation>
    <scope>NUCLEOTIDE SEQUENCE [LARGE SCALE MRNA]</scope>
</reference>
<accession>Q4V921</accession>
<keyword id="KW-0472">Membrane</keyword>
<keyword id="KW-1185">Reference proteome</keyword>
<keyword id="KW-0812">Transmembrane</keyword>
<keyword id="KW-1133">Transmembrane helix</keyword>
<gene>
    <name type="primary">smim19</name>
    <name type="ORF">zgc:114040</name>
</gene>
<name>SMI19_DANRE</name>
<feature type="chain" id="PRO_0000359894" description="Small integral membrane protein 19">
    <location>
        <begin position="1"/>
        <end position="104"/>
    </location>
</feature>
<feature type="transmembrane region" description="Helical" evidence="1">
    <location>
        <begin position="20"/>
        <end position="42"/>
    </location>
</feature>
<proteinExistence type="inferred from homology"/>
<comment type="subcellular location">
    <subcellularLocation>
        <location evidence="2">Membrane</location>
        <topology evidence="2">Single-pass membrane protein</topology>
    </subcellularLocation>
</comment>
<comment type="similarity">
    <text evidence="2">Belongs to the SMIM19 family.</text>
</comment>
<comment type="sequence caution" evidence="2">
    <conflict type="erroneous initiation">
        <sequence resource="EMBL-CDS" id="AAH97106"/>
    </conflict>
    <text>Truncated N-terminus.</text>
</comment>
<evidence type="ECO:0000255" key="1"/>
<evidence type="ECO:0000305" key="2"/>